<reference key="1">
    <citation type="journal article" date="2005" name="Nature">
        <title>The genome of the social amoeba Dictyostelium discoideum.</title>
        <authorList>
            <person name="Eichinger L."/>
            <person name="Pachebat J.A."/>
            <person name="Gloeckner G."/>
            <person name="Rajandream M.A."/>
            <person name="Sucgang R."/>
            <person name="Berriman M."/>
            <person name="Song J."/>
            <person name="Olsen R."/>
            <person name="Szafranski K."/>
            <person name="Xu Q."/>
            <person name="Tunggal B."/>
            <person name="Kummerfeld S."/>
            <person name="Madera M."/>
            <person name="Konfortov B.A."/>
            <person name="Rivero F."/>
            <person name="Bankier A.T."/>
            <person name="Lehmann R."/>
            <person name="Hamlin N."/>
            <person name="Davies R."/>
            <person name="Gaudet P."/>
            <person name="Fey P."/>
            <person name="Pilcher K."/>
            <person name="Chen G."/>
            <person name="Saunders D."/>
            <person name="Sodergren E.J."/>
            <person name="Davis P."/>
            <person name="Kerhornou A."/>
            <person name="Nie X."/>
            <person name="Hall N."/>
            <person name="Anjard C."/>
            <person name="Hemphill L."/>
            <person name="Bason N."/>
            <person name="Farbrother P."/>
            <person name="Desany B."/>
            <person name="Just E."/>
            <person name="Morio T."/>
            <person name="Rost R."/>
            <person name="Churcher C.M."/>
            <person name="Cooper J."/>
            <person name="Haydock S."/>
            <person name="van Driessche N."/>
            <person name="Cronin A."/>
            <person name="Goodhead I."/>
            <person name="Muzny D.M."/>
            <person name="Mourier T."/>
            <person name="Pain A."/>
            <person name="Lu M."/>
            <person name="Harper D."/>
            <person name="Lindsay R."/>
            <person name="Hauser H."/>
            <person name="James K.D."/>
            <person name="Quiles M."/>
            <person name="Madan Babu M."/>
            <person name="Saito T."/>
            <person name="Buchrieser C."/>
            <person name="Wardroper A."/>
            <person name="Felder M."/>
            <person name="Thangavelu M."/>
            <person name="Johnson D."/>
            <person name="Knights A."/>
            <person name="Loulseged H."/>
            <person name="Mungall K.L."/>
            <person name="Oliver K."/>
            <person name="Price C."/>
            <person name="Quail M.A."/>
            <person name="Urushihara H."/>
            <person name="Hernandez J."/>
            <person name="Rabbinowitsch E."/>
            <person name="Steffen D."/>
            <person name="Sanders M."/>
            <person name="Ma J."/>
            <person name="Kohara Y."/>
            <person name="Sharp S."/>
            <person name="Simmonds M.N."/>
            <person name="Spiegler S."/>
            <person name="Tivey A."/>
            <person name="Sugano S."/>
            <person name="White B."/>
            <person name="Walker D."/>
            <person name="Woodward J.R."/>
            <person name="Winckler T."/>
            <person name="Tanaka Y."/>
            <person name="Shaulsky G."/>
            <person name="Schleicher M."/>
            <person name="Weinstock G.M."/>
            <person name="Rosenthal A."/>
            <person name="Cox E.C."/>
            <person name="Chisholm R.L."/>
            <person name="Gibbs R.A."/>
            <person name="Loomis W.F."/>
            <person name="Platzer M."/>
            <person name="Kay R.R."/>
            <person name="Williams J.G."/>
            <person name="Dear P.H."/>
            <person name="Noegel A.A."/>
            <person name="Barrell B.G."/>
            <person name="Kuspa A."/>
        </authorList>
    </citation>
    <scope>NUCLEOTIDE SEQUENCE [LARGE SCALE GENOMIC DNA]</scope>
    <source>
        <strain>AX4</strain>
    </source>
</reference>
<dbReference type="EMBL" id="AAFI02000003">
    <property type="protein sequence ID" value="EAL73497.1"/>
    <property type="molecule type" value="Genomic_DNA"/>
</dbReference>
<dbReference type="RefSeq" id="XP_647543.1">
    <property type="nucleotide sequence ID" value="XM_642451.1"/>
</dbReference>
<dbReference type="SMR" id="Q55FJ0"/>
<dbReference type="FunCoup" id="Q55FJ0">
    <property type="interactions" value="17"/>
</dbReference>
<dbReference type="GlyGen" id="Q55FJ0">
    <property type="glycosylation" value="1 site"/>
</dbReference>
<dbReference type="PaxDb" id="44689-DDB0231499"/>
<dbReference type="EnsemblProtists" id="EAL73497">
    <property type="protein sequence ID" value="EAL73497"/>
    <property type="gene ID" value="DDB_G0268088"/>
</dbReference>
<dbReference type="GeneID" id="8616350"/>
<dbReference type="KEGG" id="ddi:DDB_G0268088"/>
<dbReference type="dictyBase" id="DDB_G0268088">
    <property type="gene designation" value="lvsG"/>
</dbReference>
<dbReference type="VEuPathDB" id="AmoebaDB:DDB_G0268088"/>
<dbReference type="eggNOG" id="KOG1786">
    <property type="taxonomic scope" value="Eukaryota"/>
</dbReference>
<dbReference type="HOGENOM" id="CLU_231449_0_0_1"/>
<dbReference type="InParanoid" id="Q55FJ0"/>
<dbReference type="OMA" id="NKMESCA"/>
<dbReference type="PRO" id="PR:Q55FJ0"/>
<dbReference type="Proteomes" id="UP000002195">
    <property type="component" value="Chromosome 1"/>
</dbReference>
<dbReference type="GO" id="GO:0005769">
    <property type="term" value="C:early endosome"/>
    <property type="evidence" value="ECO:0000318"/>
    <property type="project" value="GO_Central"/>
</dbReference>
<dbReference type="GO" id="GO:0005770">
    <property type="term" value="C:late endosome"/>
    <property type="evidence" value="ECO:0000318"/>
    <property type="project" value="GO_Central"/>
</dbReference>
<dbReference type="GO" id="GO:2000643">
    <property type="term" value="P:positive regulation of early endosome to late endosome transport"/>
    <property type="evidence" value="ECO:0000318"/>
    <property type="project" value="GO_Central"/>
</dbReference>
<dbReference type="CDD" id="cd06071">
    <property type="entry name" value="Beach"/>
    <property type="match status" value="1"/>
</dbReference>
<dbReference type="Gene3D" id="1.10.1540.10">
    <property type="entry name" value="BEACH domain"/>
    <property type="match status" value="1"/>
</dbReference>
<dbReference type="Gene3D" id="1.10.510.10">
    <property type="entry name" value="Transferase(Phosphotransferase) domain 1"/>
    <property type="match status" value="2"/>
</dbReference>
<dbReference type="Gene3D" id="2.130.10.10">
    <property type="entry name" value="YVTN repeat-like/Quinoprotein amine dehydrogenase"/>
    <property type="match status" value="2"/>
</dbReference>
<dbReference type="InterPro" id="IPR016024">
    <property type="entry name" value="ARM-type_fold"/>
</dbReference>
<dbReference type="InterPro" id="IPR000409">
    <property type="entry name" value="BEACH_dom"/>
</dbReference>
<dbReference type="InterPro" id="IPR036372">
    <property type="entry name" value="BEACH_dom_sf"/>
</dbReference>
<dbReference type="InterPro" id="IPR011009">
    <property type="entry name" value="Kinase-like_dom_sf"/>
</dbReference>
<dbReference type="InterPro" id="IPR015943">
    <property type="entry name" value="WD40/YVTN_repeat-like_dom_sf"/>
</dbReference>
<dbReference type="InterPro" id="IPR036322">
    <property type="entry name" value="WD40_repeat_dom_sf"/>
</dbReference>
<dbReference type="InterPro" id="IPR001680">
    <property type="entry name" value="WD40_rpt"/>
</dbReference>
<dbReference type="PANTHER" id="PTHR46866">
    <property type="entry name" value="GH12955P"/>
    <property type="match status" value="1"/>
</dbReference>
<dbReference type="PANTHER" id="PTHR46866:SF1">
    <property type="entry name" value="GH12955P"/>
    <property type="match status" value="1"/>
</dbReference>
<dbReference type="Pfam" id="PF02138">
    <property type="entry name" value="Beach"/>
    <property type="match status" value="2"/>
</dbReference>
<dbReference type="Pfam" id="PF00400">
    <property type="entry name" value="WD40"/>
    <property type="match status" value="2"/>
</dbReference>
<dbReference type="SMART" id="SM01026">
    <property type="entry name" value="Beach"/>
    <property type="match status" value="1"/>
</dbReference>
<dbReference type="SMART" id="SM00320">
    <property type="entry name" value="WD40"/>
    <property type="match status" value="6"/>
</dbReference>
<dbReference type="SUPFAM" id="SSF48371">
    <property type="entry name" value="ARM repeat"/>
    <property type="match status" value="1"/>
</dbReference>
<dbReference type="SUPFAM" id="SSF81837">
    <property type="entry name" value="BEACH domain"/>
    <property type="match status" value="1"/>
</dbReference>
<dbReference type="SUPFAM" id="SSF56112">
    <property type="entry name" value="Protein kinase-like (PK-like)"/>
    <property type="match status" value="2"/>
</dbReference>
<dbReference type="SUPFAM" id="SSF50978">
    <property type="entry name" value="WD40 repeat-like"/>
    <property type="match status" value="1"/>
</dbReference>
<dbReference type="PROSITE" id="PS50197">
    <property type="entry name" value="BEACH"/>
    <property type="match status" value="1"/>
</dbReference>
<dbReference type="PROSITE" id="PS50082">
    <property type="entry name" value="WD_REPEATS_2"/>
    <property type="match status" value="1"/>
</dbReference>
<dbReference type="PROSITE" id="PS50294">
    <property type="entry name" value="WD_REPEATS_REGION"/>
    <property type="match status" value="1"/>
</dbReference>
<keyword id="KW-0175">Coiled coil</keyword>
<keyword id="KW-1185">Reference proteome</keyword>
<keyword id="KW-0677">Repeat</keyword>
<keyword id="KW-0853">WD repeat</keyword>
<organism>
    <name type="scientific">Dictyostelium discoideum</name>
    <name type="common">Social amoeba</name>
    <dbReference type="NCBI Taxonomy" id="44689"/>
    <lineage>
        <taxon>Eukaryota</taxon>
        <taxon>Amoebozoa</taxon>
        <taxon>Evosea</taxon>
        <taxon>Eumycetozoa</taxon>
        <taxon>Dictyostelia</taxon>
        <taxon>Dictyosteliales</taxon>
        <taxon>Dictyosteliaceae</taxon>
        <taxon>Dictyostelium</taxon>
    </lineage>
</organism>
<feature type="chain" id="PRO_0000362022" description="Probable inactive serine/threonine-protein kinase lvsG">
    <location>
        <begin position="1"/>
        <end position="2179"/>
    </location>
</feature>
<feature type="repeat" description="WD 1">
    <location>
        <begin position="216"/>
        <end position="256"/>
    </location>
</feature>
<feature type="domain" description="BEACH" evidence="2">
    <location>
        <begin position="463"/>
        <end position="801"/>
    </location>
</feature>
<feature type="domain" description="Protein kinase">
    <location>
        <begin position="1064"/>
        <end position="1400"/>
    </location>
</feature>
<feature type="repeat" description="WD 2">
    <location>
        <begin position="1864"/>
        <end position="1903"/>
    </location>
</feature>
<feature type="repeat" description="WD 3">
    <location>
        <begin position="1906"/>
        <end position="1942"/>
    </location>
</feature>
<feature type="repeat" description="WD 4">
    <location>
        <begin position="1945"/>
        <end position="1983"/>
    </location>
</feature>
<feature type="repeat" description="WD 5">
    <location>
        <begin position="2007"/>
        <end position="2048"/>
    </location>
</feature>
<feature type="repeat" description="WD 6">
    <location>
        <begin position="2052"/>
        <end position="2089"/>
    </location>
</feature>
<feature type="repeat" description="WD 7">
    <location>
        <begin position="2149"/>
        <end position="2179"/>
    </location>
</feature>
<feature type="region of interest" description="Disordered" evidence="3">
    <location>
        <begin position="100"/>
        <end position="167"/>
    </location>
</feature>
<feature type="region of interest" description="Disordered" evidence="3">
    <location>
        <begin position="281"/>
        <end position="300"/>
    </location>
</feature>
<feature type="region of interest" description="Disordered" evidence="3">
    <location>
        <begin position="523"/>
        <end position="556"/>
    </location>
</feature>
<feature type="region of interest" description="Disordered" evidence="3">
    <location>
        <begin position="589"/>
        <end position="621"/>
    </location>
</feature>
<feature type="region of interest" description="Disordered" evidence="3">
    <location>
        <begin position="778"/>
        <end position="801"/>
    </location>
</feature>
<feature type="region of interest" description="Disordered" evidence="3">
    <location>
        <begin position="844"/>
        <end position="959"/>
    </location>
</feature>
<feature type="region of interest" description="Disordered" evidence="3">
    <location>
        <begin position="1033"/>
        <end position="1055"/>
    </location>
</feature>
<feature type="region of interest" description="Disordered" evidence="3">
    <location>
        <begin position="1079"/>
        <end position="1153"/>
    </location>
</feature>
<feature type="region of interest" description="Disordered" evidence="3">
    <location>
        <begin position="1339"/>
        <end position="1362"/>
    </location>
</feature>
<feature type="region of interest" description="Disordered" evidence="3">
    <location>
        <begin position="1785"/>
        <end position="1807"/>
    </location>
</feature>
<feature type="coiled-coil region" evidence="1">
    <location>
        <begin position="1021"/>
        <end position="1049"/>
    </location>
</feature>
<feature type="compositionally biased region" description="Low complexity" evidence="3">
    <location>
        <begin position="106"/>
        <end position="121"/>
    </location>
</feature>
<feature type="compositionally biased region" description="Low complexity" evidence="3">
    <location>
        <begin position="141"/>
        <end position="159"/>
    </location>
</feature>
<feature type="compositionally biased region" description="Low complexity" evidence="3">
    <location>
        <begin position="534"/>
        <end position="548"/>
    </location>
</feature>
<feature type="compositionally biased region" description="Gly residues" evidence="3">
    <location>
        <begin position="590"/>
        <end position="602"/>
    </location>
</feature>
<feature type="compositionally biased region" description="Low complexity" evidence="3">
    <location>
        <begin position="783"/>
        <end position="800"/>
    </location>
</feature>
<feature type="compositionally biased region" description="Low complexity" evidence="3">
    <location>
        <begin position="853"/>
        <end position="943"/>
    </location>
</feature>
<feature type="compositionally biased region" description="Low complexity" evidence="3">
    <location>
        <begin position="1033"/>
        <end position="1047"/>
    </location>
</feature>
<feature type="compositionally biased region" description="Low complexity" evidence="3">
    <location>
        <begin position="1084"/>
        <end position="1098"/>
    </location>
</feature>
<feature type="compositionally biased region" description="Polar residues" evidence="3">
    <location>
        <begin position="1099"/>
        <end position="1122"/>
    </location>
</feature>
<feature type="compositionally biased region" description="Low complexity" evidence="3">
    <location>
        <begin position="1123"/>
        <end position="1134"/>
    </location>
</feature>
<feature type="compositionally biased region" description="Polar residues" evidence="3">
    <location>
        <begin position="1135"/>
        <end position="1153"/>
    </location>
</feature>
<feature type="compositionally biased region" description="Low complexity" evidence="3">
    <location>
        <begin position="1339"/>
        <end position="1360"/>
    </location>
</feature>
<feature type="compositionally biased region" description="Low complexity" evidence="3">
    <location>
        <begin position="1785"/>
        <end position="1801"/>
    </location>
</feature>
<gene>
    <name type="primary">lvsG</name>
    <name type="ORF">DDB_G0268088</name>
</gene>
<accession>Q55FJ0</accession>
<proteinExistence type="inferred from homology"/>
<protein>
    <recommendedName>
        <fullName>Probable inactive serine/threonine-protein kinase lvsG</fullName>
    </recommendedName>
    <alternativeName>
        <fullName>Large volume sphere mutant lvsA-like protein G</fullName>
    </alternativeName>
</protein>
<sequence>MGQTVSKEEIKEEIEKQLNICFLSLDQEDIHSKNSISFNLSTVSAHKGSIDFIFNKTSNNNSSLIGSNGFVNISNNNIIDDLIKDKSTSILLQYANKHNDHDLNKNKNNNNNSEENNNNSGEGDEDNTGEKAPPPAPSSPLSPSSSSSTSTTTTPLSTSISLNDLNSMPRKRTTIKYKQGSFEASSYDGDEISIQVVKKNWINNSNDNNSQQRPRLYERSLKTSQQQQQQQQQQFKFQPNETLSLWEYFDEINSPPMLYNIDQNNLNFTNNYIVQEKLNSLDNKDDDDNNNNNNNSNSQSFTFNKEFIKSVLQSFSTYISSLPNSIHFTDTNIPPSIDYTSPNVLKLHPNLLPIIEIIYNDIDNNDNDNDDDDDKNNNNLNDKIFIIYKKYNYTLDGLLRYSLQYLQRNQKITTFMIYQLIQLFSFLHQREIVHGDLQPSNIHLNNQMWLGLEGFSFPSTPLYHQPLENQFESSMNKWINGELSNFNYLMILNHLAHRHIGDPMNHPVLPWVIDFTTSPINIDNDNDSRDDVDNSSSSNNNNNNNNEDQSGKTVGWRDLTKTKYRLNKGDEQLDFQFFNTGNSTTLGDDSMGGGIGSIGSTGGITNSSNNGGGGGSGNSGKAHHISDILSELTYYSYLARRTSVPLLRRFVRTNYEPNEYPATMERLYRWTPDECIPEFFTDSTIFKSIHSDMPDLQLPDWVPNQSTQEFIKIHMNALESDHVSKQLHSWIDLTFGYLLSGEEAIKAKNLALMDTTIPRNNGIVQLFNHPHPKKKYLKSLKYQRQQQTQQHQQQTQQQPQFDTEFTIKFNESSFRYENQNINHNSTFLPNTTINSILNNLSNVNNHHHHHSHNSNIPNTVSSRSDSFGSNSSSSAPGNSNSNILLSPSMSSSMGSLNSATSPSSQSQSSHQQTSSTPTSQTQRSFSIINNNNSSSSSNSGVNNKPRTSSGKKEGENKPSLAKFLPSLFTQAIKIEKEDNSIVSSSPTNTPVQIDLLSSVNSNYIGYGSSIGNSSMQHQLYLQQQLQQQQQQQAQQQQSQQQSQQQQANSPNSKQLHLIHSKSEESMIKKYSNGLFSSMGISKSTTNAPTTNNTTTNSNMGDSIGNNITSPPSPTSLKDSSSIQQQQQQQQQQQQNSESTRPITPPNVSNSTTDLSSIYTNQEHIIEPLPAELELELYEYELLNKDVTGINANIIYSSSPTNVSTTTNTTTSTTQPYIIYNNNTTQNNVASYHSQQKKPNVFIESLLNCELNNEFGHNFENLLPIYRPLEFNDNNSGSSELSIDNEKNKGLIKIFSNNKEQSNLEILKSNDMFALGCIIAELYQGYPLFTSKGLENHFLNHSNSSNNNNNNNNNNNNNNKNGSFMITSNLPNNVKEIVDKLIQPNPMERSEVNELLSSSLFPNYFKQMYHFLVHYHSLNTPEERLTFTLANIGIVTSLPNESIDLILPFILELFYDSKTMVSALIDLLDPLSQRLGIHLSTSYLLPCLIALYQRHDDHLLQCHLIQIPMIDMIVSRFGRDVYIHHILPFLLDSVKTNPKDNPNHEMLTTALIKISKVLGIPLTIRHMMYPLLVALTKPRLQHLNEPLVAIASSLGENVIVKFYFPSIFILIQKHSSKASRSESIPCTLLSLLQELILLVKPGLVLRSLLKESTQLASLLLNPSNTSLLLPLAETLLRISGRIGVNHTKNYILKYVQQFFSNYSDLYDYSGDNSYAKIGGDSETTKQLRSIYSPEMTYYLYYKLARIIGFEVMRAEISDNSLIEHIMRIYIKENNIKTTNSTITTTTTTTTTTTTTTTTNNNNENPNSLNFIPPYVSDDGLYDIIEETLDQKISSTYLLDDYQDYDDLICDKTFTLQGNIVAQYKEHNASIKSLAVSPSEERFISGSKDNLVKIWSLDSTKSLTTYNQHMHTAHTVHFVSSLVASCDITSIQVWDPESKIKVNVFYEPTGSFSCFEPISSKYLIASTCESTLSFYDLSMGSLTHEWSLAYQTGQAIRCIATSNDHLIGSNSNQFSSSSFIASATPTWVATGSSSGMITLLDTRTGTILEQWKSHHDSPVNKLIAQGSRYLISCGDKSVIQWDLHQSPPIISKMWKGFKDNITNASLYQNDLIVSSGHKLSSMTLLDDPYQLTSGGGNQNTFRVDGLKLNTPKQSNILSLSFFPLHHVLLAGTDDGFIKICQ</sequence>
<evidence type="ECO:0000255" key="1"/>
<evidence type="ECO:0000255" key="2">
    <source>
        <dbReference type="PROSITE-ProRule" id="PRU00026"/>
    </source>
</evidence>
<evidence type="ECO:0000256" key="3">
    <source>
        <dbReference type="SAM" id="MobiDB-lite"/>
    </source>
</evidence>
<evidence type="ECO:0000305" key="4"/>
<comment type="domain">
    <text>The protein kinase domain is predicted to be catalytically inactive.</text>
</comment>
<comment type="similarity">
    <text evidence="4">Belongs to the protein kinase superfamily. Ser/Thr protein kinase family.</text>
</comment>
<name>LVSG_DICDI</name>